<gene>
    <name evidence="1" type="primary">psbE</name>
</gene>
<feature type="chain" id="PRO_0000233213" description="Cytochrome b559 subunit alpha">
    <location>
        <begin position="1"/>
        <end position="83"/>
    </location>
</feature>
<feature type="transmembrane region" description="Helical" evidence="1">
    <location>
        <begin position="21"/>
        <end position="35"/>
    </location>
</feature>
<feature type="binding site" description="axial binding residue" evidence="1">
    <location>
        <position position="23"/>
    </location>
    <ligand>
        <name>heme</name>
        <dbReference type="ChEBI" id="CHEBI:30413"/>
        <note>ligand shared with beta subunit</note>
    </ligand>
    <ligandPart>
        <name>Fe</name>
        <dbReference type="ChEBI" id="CHEBI:18248"/>
    </ligandPart>
</feature>
<protein>
    <recommendedName>
        <fullName evidence="1">Cytochrome b559 subunit alpha</fullName>
    </recommendedName>
    <alternativeName>
        <fullName evidence="1">PSII reaction center subunit V</fullName>
    </alternativeName>
</protein>
<geneLocation type="chloroplast"/>
<comment type="function">
    <text evidence="1">This b-type cytochrome is tightly associated with the reaction center of photosystem II (PSII). PSII is a light-driven water:plastoquinone oxidoreductase that uses light energy to abstract electrons from H(2)O, generating O(2) and a proton gradient subsequently used for ATP formation. It consists of a core antenna complex that captures photons, and an electron transfer chain that converts photonic excitation into a charge separation.</text>
</comment>
<comment type="cofactor">
    <cofactor evidence="1">
        <name>heme b</name>
        <dbReference type="ChEBI" id="CHEBI:60344"/>
    </cofactor>
    <text evidence="1">With its partner (PsbF) binds heme. PSII binds additional chlorophylls, carotenoids and specific lipids.</text>
</comment>
<comment type="subunit">
    <text evidence="1">Heterodimer of an alpha subunit and a beta subunit. PSII is composed of 1 copy each of membrane proteins PsbA, PsbB, PsbC, PsbD, PsbE, PsbF, PsbH, PsbI, PsbJ, PsbK, PsbL, PsbM, PsbT, PsbX, PsbY, PsbZ, Psb30/Ycf12, at least 3 peripheral proteins of the oxygen-evolving complex and a large number of cofactors. It forms dimeric complexes.</text>
</comment>
<comment type="subcellular location">
    <subcellularLocation>
        <location evidence="1">Plastid</location>
        <location evidence="1">Chloroplast thylakoid membrane</location>
        <topology evidence="1">Single-pass membrane protein</topology>
    </subcellularLocation>
</comment>
<comment type="similarity">
    <text evidence="1">Belongs to the PsbE/PsbF family.</text>
</comment>
<proteinExistence type="inferred from homology"/>
<organism>
    <name type="scientific">Zygnema circumcarinatum</name>
    <name type="common">Green alga</name>
    <dbReference type="NCBI Taxonomy" id="35869"/>
    <lineage>
        <taxon>Eukaryota</taxon>
        <taxon>Viridiplantae</taxon>
        <taxon>Streptophyta</taxon>
        <taxon>Zygnematophyceae</taxon>
        <taxon>Zygnematophycidae</taxon>
        <taxon>Zygnematales</taxon>
        <taxon>Zygnemataceae</taxon>
        <taxon>Zygnema</taxon>
    </lineage>
</organism>
<dbReference type="EMBL" id="AY958086">
    <property type="protein sequence ID" value="AAX45840.1"/>
    <property type="molecule type" value="Genomic_DNA"/>
</dbReference>
<dbReference type="RefSeq" id="YP_636531.1">
    <property type="nucleotide sequence ID" value="NC_008117.1"/>
</dbReference>
<dbReference type="SMR" id="Q32RJ5"/>
<dbReference type="GeneID" id="4108160"/>
<dbReference type="GO" id="GO:0009535">
    <property type="term" value="C:chloroplast thylakoid membrane"/>
    <property type="evidence" value="ECO:0007669"/>
    <property type="project" value="UniProtKB-SubCell"/>
</dbReference>
<dbReference type="GO" id="GO:0009539">
    <property type="term" value="C:photosystem II reaction center"/>
    <property type="evidence" value="ECO:0007669"/>
    <property type="project" value="InterPro"/>
</dbReference>
<dbReference type="GO" id="GO:0009055">
    <property type="term" value="F:electron transfer activity"/>
    <property type="evidence" value="ECO:0007669"/>
    <property type="project" value="UniProtKB-UniRule"/>
</dbReference>
<dbReference type="GO" id="GO:0020037">
    <property type="term" value="F:heme binding"/>
    <property type="evidence" value="ECO:0007669"/>
    <property type="project" value="InterPro"/>
</dbReference>
<dbReference type="GO" id="GO:0005506">
    <property type="term" value="F:iron ion binding"/>
    <property type="evidence" value="ECO:0007669"/>
    <property type="project" value="UniProtKB-UniRule"/>
</dbReference>
<dbReference type="GO" id="GO:0009767">
    <property type="term" value="P:photosynthetic electron transport chain"/>
    <property type="evidence" value="ECO:0007669"/>
    <property type="project" value="InterPro"/>
</dbReference>
<dbReference type="Gene3D" id="1.20.5.860">
    <property type="entry name" value="Photosystem II cytochrome b559, alpha subunit"/>
    <property type="match status" value="1"/>
</dbReference>
<dbReference type="HAMAP" id="MF_00642">
    <property type="entry name" value="PSII_PsbE"/>
    <property type="match status" value="1"/>
</dbReference>
<dbReference type="InterPro" id="IPR006217">
    <property type="entry name" value="PSII_cyt_b559_asu"/>
</dbReference>
<dbReference type="InterPro" id="IPR037025">
    <property type="entry name" value="PSII_cyt_b559_asu_sf"/>
</dbReference>
<dbReference type="InterPro" id="IPR006216">
    <property type="entry name" value="PSII_cyt_b559_CS"/>
</dbReference>
<dbReference type="InterPro" id="IPR013081">
    <property type="entry name" value="PSII_cyt_b559_N"/>
</dbReference>
<dbReference type="InterPro" id="IPR013082">
    <property type="entry name" value="PSII_cytb559_asu_lum"/>
</dbReference>
<dbReference type="NCBIfam" id="TIGR01332">
    <property type="entry name" value="cyt_b559_alpha"/>
    <property type="match status" value="1"/>
</dbReference>
<dbReference type="PANTHER" id="PTHR33391">
    <property type="entry name" value="CYTOCHROME B559 SUBUNIT BETA-RELATED"/>
    <property type="match status" value="1"/>
</dbReference>
<dbReference type="PANTHER" id="PTHR33391:SF9">
    <property type="entry name" value="CYTOCHROME B559 SUBUNIT BETA-RELATED"/>
    <property type="match status" value="1"/>
</dbReference>
<dbReference type="Pfam" id="PF00283">
    <property type="entry name" value="Cytochrom_B559"/>
    <property type="match status" value="1"/>
</dbReference>
<dbReference type="Pfam" id="PF00284">
    <property type="entry name" value="Cytochrom_B559a"/>
    <property type="match status" value="1"/>
</dbReference>
<dbReference type="PIRSF" id="PIRSF000036">
    <property type="entry name" value="PsbE"/>
    <property type="match status" value="1"/>
</dbReference>
<dbReference type="SUPFAM" id="SSF161045">
    <property type="entry name" value="Cytochrome b559 subunits"/>
    <property type="match status" value="1"/>
</dbReference>
<dbReference type="PROSITE" id="PS00537">
    <property type="entry name" value="CYTOCHROME_B559"/>
    <property type="match status" value="1"/>
</dbReference>
<accession>Q32RJ5</accession>
<evidence type="ECO:0000255" key="1">
    <source>
        <dbReference type="HAMAP-Rule" id="MF_00642"/>
    </source>
</evidence>
<keyword id="KW-0150">Chloroplast</keyword>
<keyword id="KW-0249">Electron transport</keyword>
<keyword id="KW-0349">Heme</keyword>
<keyword id="KW-0408">Iron</keyword>
<keyword id="KW-0472">Membrane</keyword>
<keyword id="KW-0479">Metal-binding</keyword>
<keyword id="KW-0602">Photosynthesis</keyword>
<keyword id="KW-0604">Photosystem II</keyword>
<keyword id="KW-0934">Plastid</keyword>
<keyword id="KW-0793">Thylakoid</keyword>
<keyword id="KW-0812">Transmembrane</keyword>
<keyword id="KW-1133">Transmembrane helix</keyword>
<keyword id="KW-0813">Transport</keyword>
<name>PSBE_ZYGCR</name>
<reference key="1">
    <citation type="journal article" date="2005" name="BMC Biol.">
        <title>The complete chloroplast DNA sequences of the charophycean green algae Staurastrum and Zygnema reveal that the chloroplast genome underwent extensive changes during the evolution of the Zygnematales.</title>
        <authorList>
            <person name="Turmel M."/>
            <person name="Otis C."/>
            <person name="Lemieux C."/>
        </authorList>
    </citation>
    <scope>NUCLEOTIDE SEQUENCE [LARGE SCALE GENOMIC DNA]</scope>
</reference>
<sequence>MSGNTGERPFADIITSIRYWVIHSITIPSLFIAGWLFVSTGLAYDVFGSPRPNEYFTESRQEIPLITGRFNSLEQLDEFTRAL</sequence>